<organism>
    <name type="scientific">Edwardsiella ictaluri (strain 93-146)</name>
    <dbReference type="NCBI Taxonomy" id="634503"/>
    <lineage>
        <taxon>Bacteria</taxon>
        <taxon>Pseudomonadati</taxon>
        <taxon>Pseudomonadota</taxon>
        <taxon>Gammaproteobacteria</taxon>
        <taxon>Enterobacterales</taxon>
        <taxon>Hafniaceae</taxon>
        <taxon>Edwardsiella</taxon>
    </lineage>
</organism>
<proteinExistence type="inferred from homology"/>
<comment type="function">
    <text evidence="1">Catalyzes the isomerization of sedoheptulose 7-phosphate in D-glycero-D-manno-heptose 7-phosphate.</text>
</comment>
<comment type="catalytic activity">
    <reaction evidence="1">
        <text>2 D-sedoheptulose 7-phosphate = D-glycero-alpha-D-manno-heptose 7-phosphate + D-glycero-beta-D-manno-heptose 7-phosphate</text>
        <dbReference type="Rhea" id="RHEA:27489"/>
        <dbReference type="ChEBI" id="CHEBI:57483"/>
        <dbReference type="ChEBI" id="CHEBI:60203"/>
        <dbReference type="ChEBI" id="CHEBI:60204"/>
        <dbReference type="EC" id="5.3.1.28"/>
    </reaction>
</comment>
<comment type="cofactor">
    <cofactor evidence="1">
        <name>Zn(2+)</name>
        <dbReference type="ChEBI" id="CHEBI:29105"/>
    </cofactor>
    <text evidence="1">Binds 1 zinc ion per subunit.</text>
</comment>
<comment type="pathway">
    <text evidence="1">Carbohydrate biosynthesis; D-glycero-D-manno-heptose 7-phosphate biosynthesis; D-glycero-alpha-D-manno-heptose 7-phosphate and D-glycero-beta-D-manno-heptose 7-phosphate from sedoheptulose 7-phosphate: step 1/1.</text>
</comment>
<comment type="subunit">
    <text evidence="1">Homotetramer.</text>
</comment>
<comment type="subcellular location">
    <subcellularLocation>
        <location evidence="1">Cytoplasm</location>
    </subcellularLocation>
</comment>
<comment type="miscellaneous">
    <text evidence="1">The reaction produces a racemic mixture of D-glycero-alpha-D-manno-heptose 7-phosphate and D-glycero-beta-D-manno-heptose 7-phosphate.</text>
</comment>
<comment type="similarity">
    <text evidence="1">Belongs to the SIS family. GmhA subfamily.</text>
</comment>
<dbReference type="EC" id="5.3.1.28" evidence="1"/>
<dbReference type="EMBL" id="CP001600">
    <property type="protein sequence ID" value="ACR68108.1"/>
    <property type="molecule type" value="Genomic_DNA"/>
</dbReference>
<dbReference type="SMR" id="C5B7W2"/>
<dbReference type="STRING" id="67780.B6E78_14985"/>
<dbReference type="KEGG" id="eic:NT01EI_0894"/>
<dbReference type="PATRIC" id="fig|634503.3.peg.807"/>
<dbReference type="HOGENOM" id="CLU_080999_4_0_6"/>
<dbReference type="OrthoDB" id="9810929at2"/>
<dbReference type="UniPathway" id="UPA00041">
    <property type="reaction ID" value="UER00436"/>
</dbReference>
<dbReference type="Proteomes" id="UP000001485">
    <property type="component" value="Chromosome"/>
</dbReference>
<dbReference type="GO" id="GO:0005737">
    <property type="term" value="C:cytoplasm"/>
    <property type="evidence" value="ECO:0007669"/>
    <property type="project" value="UniProtKB-SubCell"/>
</dbReference>
<dbReference type="GO" id="GO:0097367">
    <property type="term" value="F:carbohydrate derivative binding"/>
    <property type="evidence" value="ECO:0007669"/>
    <property type="project" value="InterPro"/>
</dbReference>
<dbReference type="GO" id="GO:0008968">
    <property type="term" value="F:D-sedoheptulose 7-phosphate isomerase activity"/>
    <property type="evidence" value="ECO:0007669"/>
    <property type="project" value="UniProtKB-UniRule"/>
</dbReference>
<dbReference type="GO" id="GO:0008270">
    <property type="term" value="F:zinc ion binding"/>
    <property type="evidence" value="ECO:0007669"/>
    <property type="project" value="UniProtKB-UniRule"/>
</dbReference>
<dbReference type="GO" id="GO:0005975">
    <property type="term" value="P:carbohydrate metabolic process"/>
    <property type="evidence" value="ECO:0007669"/>
    <property type="project" value="UniProtKB-UniRule"/>
</dbReference>
<dbReference type="GO" id="GO:2001061">
    <property type="term" value="P:D-glycero-D-manno-heptose 7-phosphate biosynthetic process"/>
    <property type="evidence" value="ECO:0007669"/>
    <property type="project" value="UniProtKB-UniPathway"/>
</dbReference>
<dbReference type="CDD" id="cd05006">
    <property type="entry name" value="SIS_GmhA"/>
    <property type="match status" value="1"/>
</dbReference>
<dbReference type="FunFam" id="3.40.50.10490:FF:000013">
    <property type="entry name" value="Phosphoheptose isomerase"/>
    <property type="match status" value="1"/>
</dbReference>
<dbReference type="Gene3D" id="3.40.50.10490">
    <property type="entry name" value="Glucose-6-phosphate isomerase like protein, domain 1"/>
    <property type="match status" value="1"/>
</dbReference>
<dbReference type="HAMAP" id="MF_00067">
    <property type="entry name" value="GmhA"/>
    <property type="match status" value="1"/>
</dbReference>
<dbReference type="InterPro" id="IPR035461">
    <property type="entry name" value="GmhA/DiaA"/>
</dbReference>
<dbReference type="InterPro" id="IPR004515">
    <property type="entry name" value="Phosphoheptose_Isoase"/>
</dbReference>
<dbReference type="InterPro" id="IPR001347">
    <property type="entry name" value="SIS_dom"/>
</dbReference>
<dbReference type="InterPro" id="IPR046348">
    <property type="entry name" value="SIS_dom_sf"/>
</dbReference>
<dbReference type="InterPro" id="IPR050099">
    <property type="entry name" value="SIS_GmhA/DiaA_subfam"/>
</dbReference>
<dbReference type="NCBIfam" id="TIGR00441">
    <property type="entry name" value="gmhA"/>
    <property type="match status" value="1"/>
</dbReference>
<dbReference type="NCBIfam" id="NF001628">
    <property type="entry name" value="PRK00414.1"/>
    <property type="match status" value="1"/>
</dbReference>
<dbReference type="PANTHER" id="PTHR30390:SF7">
    <property type="entry name" value="PHOSPHOHEPTOSE ISOMERASE"/>
    <property type="match status" value="1"/>
</dbReference>
<dbReference type="PANTHER" id="PTHR30390">
    <property type="entry name" value="SEDOHEPTULOSE 7-PHOSPHATE ISOMERASE / DNAA INITIATOR-ASSOCIATING FACTOR FOR REPLICATION INITIATION"/>
    <property type="match status" value="1"/>
</dbReference>
<dbReference type="Pfam" id="PF13580">
    <property type="entry name" value="SIS_2"/>
    <property type="match status" value="1"/>
</dbReference>
<dbReference type="SUPFAM" id="SSF53697">
    <property type="entry name" value="SIS domain"/>
    <property type="match status" value="1"/>
</dbReference>
<dbReference type="PROSITE" id="PS51464">
    <property type="entry name" value="SIS"/>
    <property type="match status" value="1"/>
</dbReference>
<gene>
    <name evidence="1" type="primary">gmhA</name>
    <name type="ordered locus">NT01EI_0894</name>
</gene>
<accession>C5B7W2</accession>
<reference key="1">
    <citation type="submission" date="2009-03" db="EMBL/GenBank/DDBJ databases">
        <title>Complete genome sequence of Edwardsiella ictaluri 93-146.</title>
        <authorList>
            <person name="Williams M.L."/>
            <person name="Gillaspy A.F."/>
            <person name="Dyer D.W."/>
            <person name="Thune R.L."/>
            <person name="Waldbieser G.C."/>
            <person name="Schuster S.C."/>
            <person name="Gipson J."/>
            <person name="Zaitshik J."/>
            <person name="Landry C."/>
            <person name="Lawrence M.L."/>
        </authorList>
    </citation>
    <scope>NUCLEOTIDE SEQUENCE [LARGE SCALE GENOMIC DNA]</scope>
    <source>
        <strain>93-146</strain>
    </source>
</reference>
<protein>
    <recommendedName>
        <fullName evidence="1">Phosphoheptose isomerase</fullName>
        <ecNumber evidence="1">5.3.1.28</ecNumber>
    </recommendedName>
    <alternativeName>
        <fullName evidence="1">Sedoheptulose 7-phosphate isomerase</fullName>
    </alternativeName>
</protein>
<evidence type="ECO:0000255" key="1">
    <source>
        <dbReference type="HAMAP-Rule" id="MF_00067"/>
    </source>
</evidence>
<keyword id="KW-0119">Carbohydrate metabolism</keyword>
<keyword id="KW-0963">Cytoplasm</keyword>
<keyword id="KW-0413">Isomerase</keyword>
<keyword id="KW-0479">Metal-binding</keyword>
<keyword id="KW-0862">Zinc</keyword>
<sequence>MYQDLIRSELNEAAQTLNNFLADEANILAIQQAAQLLAASFKADGKVLSCGNGGSHCDAMHFAEELTGRYRENRPGYPAIAISDPSHLSCVSNDFGYDYVFSRYVEAVGREGDVLLGISTSGNSGNIIRAIEAARAKGMKVITLTGKDGGKMAGSADVEIRVPHFGYADRIQEIHIKAIHIMIQLIEKEMASV</sequence>
<feature type="chain" id="PRO_1000202419" description="Phosphoheptose isomerase">
    <location>
        <begin position="1"/>
        <end position="193"/>
    </location>
</feature>
<feature type="domain" description="SIS" evidence="1">
    <location>
        <begin position="37"/>
        <end position="193"/>
    </location>
</feature>
<feature type="binding site" evidence="1">
    <location>
        <begin position="52"/>
        <end position="54"/>
    </location>
    <ligand>
        <name>substrate</name>
    </ligand>
</feature>
<feature type="binding site" evidence="1">
    <location>
        <position position="61"/>
    </location>
    <ligand>
        <name>Zn(2+)</name>
        <dbReference type="ChEBI" id="CHEBI:29105"/>
    </ligand>
</feature>
<feature type="binding site" evidence="1">
    <location>
        <position position="65"/>
    </location>
    <ligand>
        <name>substrate</name>
    </ligand>
</feature>
<feature type="binding site" evidence="1">
    <location>
        <position position="65"/>
    </location>
    <ligand>
        <name>Zn(2+)</name>
        <dbReference type="ChEBI" id="CHEBI:29105"/>
    </ligand>
</feature>
<feature type="binding site" evidence="1">
    <location>
        <begin position="93"/>
        <end position="94"/>
    </location>
    <ligand>
        <name>substrate</name>
    </ligand>
</feature>
<feature type="binding site" evidence="1">
    <location>
        <begin position="119"/>
        <end position="121"/>
    </location>
    <ligand>
        <name>substrate</name>
    </ligand>
</feature>
<feature type="binding site" evidence="1">
    <location>
        <position position="124"/>
    </location>
    <ligand>
        <name>substrate</name>
    </ligand>
</feature>
<feature type="binding site" evidence="1">
    <location>
        <position position="172"/>
    </location>
    <ligand>
        <name>substrate</name>
    </ligand>
</feature>
<feature type="binding site" evidence="1">
    <location>
        <position position="172"/>
    </location>
    <ligand>
        <name>Zn(2+)</name>
        <dbReference type="ChEBI" id="CHEBI:29105"/>
    </ligand>
</feature>
<feature type="binding site" evidence="1">
    <location>
        <position position="180"/>
    </location>
    <ligand>
        <name>Zn(2+)</name>
        <dbReference type="ChEBI" id="CHEBI:29105"/>
    </ligand>
</feature>
<name>GMHA_EDWI9</name>